<evidence type="ECO:0000256" key="1">
    <source>
        <dbReference type="SAM" id="MobiDB-lite"/>
    </source>
</evidence>
<reference key="1">
    <citation type="journal article" date="1993" name="Mol. Microbiol.">
        <title>DNA sequence, structure and gene expression of mycobacteriophage L5: a phage system for mycobacterial genetics.</title>
        <authorList>
            <person name="Hatfull G.F."/>
            <person name="Sarkis G.J."/>
        </authorList>
    </citation>
    <scope>NUCLEOTIDE SEQUENCE [LARGE SCALE GENOMIC DNA]</scope>
</reference>
<keyword id="KW-1185">Reference proteome</keyword>
<dbReference type="EMBL" id="Z18946">
    <property type="protein sequence ID" value="CAA79381.1"/>
    <property type="molecule type" value="Genomic_DNA"/>
</dbReference>
<dbReference type="PIR" id="S30950">
    <property type="entry name" value="S30950"/>
</dbReference>
<dbReference type="RefSeq" id="NP_039669.1">
    <property type="nucleotide sequence ID" value="NC_001335.1"/>
</dbReference>
<dbReference type="GeneID" id="2942937"/>
<dbReference type="KEGG" id="vg:2942937"/>
<dbReference type="OrthoDB" id="5733at10239"/>
<dbReference type="Proteomes" id="UP000002123">
    <property type="component" value="Genome"/>
</dbReference>
<organismHost>
    <name type="scientific">Mycobacterium</name>
    <dbReference type="NCBI Taxonomy" id="1763"/>
</organismHost>
<feature type="chain" id="PRO_0000164699" description="Gene 2 protein">
    <location>
        <begin position="1"/>
        <end position="259"/>
    </location>
</feature>
<feature type="region of interest" description="Disordered" evidence="1">
    <location>
        <begin position="1"/>
        <end position="36"/>
    </location>
</feature>
<feature type="compositionally biased region" description="Basic and acidic residues" evidence="1">
    <location>
        <begin position="1"/>
        <end position="12"/>
    </location>
</feature>
<feature type="compositionally biased region" description="Basic and acidic residues" evidence="1">
    <location>
        <begin position="21"/>
        <end position="36"/>
    </location>
</feature>
<organism>
    <name type="scientific">Mycobacterium phage L5</name>
    <name type="common">Mycobacteriophage L5</name>
    <dbReference type="NCBI Taxonomy" id="31757"/>
    <lineage>
        <taxon>Viruses</taxon>
        <taxon>Duplodnaviria</taxon>
        <taxon>Heunggongvirae</taxon>
        <taxon>Uroviricota</taxon>
        <taxon>Caudoviricetes</taxon>
        <taxon>Fromanvirus</taxon>
    </lineage>
</organism>
<accession>Q05230</accession>
<proteinExistence type="predicted"/>
<name>VG02_BPML5</name>
<gene>
    <name type="primary">2</name>
</gene>
<protein>
    <recommendedName>
        <fullName>Gene 2 protein</fullName>
    </recommendedName>
    <alternativeName>
        <fullName>Gp2</fullName>
    </alternativeName>
</protein>
<sequence length="259" mass="28678">MPPTELEKKRGEYNQIAIDAQKQHAPTDEKREAKRKQLMDRVGGDWQALDPDHHDAIKVAMDDAMRKILSEEEIVHRTKHFGDLLDSGRLKSLFEVGFSAGGDTPTERALLEDAWFGAGKVPPIYSAIEFNGAPTAGLGMYGGTKLYMKDSVKDRVTVTIGDSLMSSWDVFPGRPGDGVGLWASLSKIEGLVDPSKTREENMQAVYDSFKKYGTLDGFIEAQIHGGVLVEDIKKVVFTQPPSPIFTDKLDELGIPWEVQ</sequence>